<organism>
    <name type="scientific">Citrobacter koseri (strain ATCC BAA-895 / CDC 4225-83 / SGSC4696)</name>
    <dbReference type="NCBI Taxonomy" id="290338"/>
    <lineage>
        <taxon>Bacteria</taxon>
        <taxon>Pseudomonadati</taxon>
        <taxon>Pseudomonadota</taxon>
        <taxon>Gammaproteobacteria</taxon>
        <taxon>Enterobacterales</taxon>
        <taxon>Enterobacteriaceae</taxon>
        <taxon>Citrobacter</taxon>
    </lineage>
</organism>
<keyword id="KW-0067">ATP-binding</keyword>
<keyword id="KW-0963">Cytoplasm</keyword>
<keyword id="KW-0227">DNA damage</keyword>
<keyword id="KW-0234">DNA repair</keyword>
<keyword id="KW-0235">DNA replication</keyword>
<keyword id="KW-0238">DNA-binding</keyword>
<keyword id="KW-0547">Nucleotide-binding</keyword>
<keyword id="KW-1185">Reference proteome</keyword>
<keyword id="KW-0742">SOS response</keyword>
<feature type="chain" id="PRO_1000048508" description="DNA replication and repair protein RecF">
    <location>
        <begin position="1"/>
        <end position="357"/>
    </location>
</feature>
<feature type="binding site" evidence="1">
    <location>
        <begin position="30"/>
        <end position="37"/>
    </location>
    <ligand>
        <name>ATP</name>
        <dbReference type="ChEBI" id="CHEBI:30616"/>
    </ligand>
</feature>
<dbReference type="EMBL" id="CP000822">
    <property type="protein sequence ID" value="ABV11225.1"/>
    <property type="molecule type" value="Genomic_DNA"/>
</dbReference>
<dbReference type="RefSeq" id="WP_012000805.1">
    <property type="nucleotide sequence ID" value="NC_009792.1"/>
</dbReference>
<dbReference type="SMR" id="A8ACL2"/>
<dbReference type="STRING" id="290338.CKO_00046"/>
<dbReference type="GeneID" id="45134351"/>
<dbReference type="KEGG" id="cko:CKO_00046"/>
<dbReference type="HOGENOM" id="CLU_040267_0_0_6"/>
<dbReference type="OrthoDB" id="9803889at2"/>
<dbReference type="Proteomes" id="UP000008148">
    <property type="component" value="Chromosome"/>
</dbReference>
<dbReference type="GO" id="GO:0005737">
    <property type="term" value="C:cytoplasm"/>
    <property type="evidence" value="ECO:0007669"/>
    <property type="project" value="UniProtKB-SubCell"/>
</dbReference>
<dbReference type="GO" id="GO:0005524">
    <property type="term" value="F:ATP binding"/>
    <property type="evidence" value="ECO:0007669"/>
    <property type="project" value="UniProtKB-UniRule"/>
</dbReference>
<dbReference type="GO" id="GO:0003697">
    <property type="term" value="F:single-stranded DNA binding"/>
    <property type="evidence" value="ECO:0007669"/>
    <property type="project" value="UniProtKB-UniRule"/>
</dbReference>
<dbReference type="GO" id="GO:0006260">
    <property type="term" value="P:DNA replication"/>
    <property type="evidence" value="ECO:0007669"/>
    <property type="project" value="UniProtKB-UniRule"/>
</dbReference>
<dbReference type="GO" id="GO:0000731">
    <property type="term" value="P:DNA synthesis involved in DNA repair"/>
    <property type="evidence" value="ECO:0007669"/>
    <property type="project" value="TreeGrafter"/>
</dbReference>
<dbReference type="GO" id="GO:0006302">
    <property type="term" value="P:double-strand break repair"/>
    <property type="evidence" value="ECO:0007669"/>
    <property type="project" value="TreeGrafter"/>
</dbReference>
<dbReference type="GO" id="GO:0009432">
    <property type="term" value="P:SOS response"/>
    <property type="evidence" value="ECO:0007669"/>
    <property type="project" value="UniProtKB-UniRule"/>
</dbReference>
<dbReference type="FunFam" id="1.20.1050.90:FF:000001">
    <property type="entry name" value="DNA replication and repair protein RecF"/>
    <property type="match status" value="1"/>
</dbReference>
<dbReference type="Gene3D" id="3.40.50.300">
    <property type="entry name" value="P-loop containing nucleotide triphosphate hydrolases"/>
    <property type="match status" value="1"/>
</dbReference>
<dbReference type="Gene3D" id="1.20.1050.90">
    <property type="entry name" value="RecF/RecN/SMC, N-terminal domain"/>
    <property type="match status" value="1"/>
</dbReference>
<dbReference type="HAMAP" id="MF_00365">
    <property type="entry name" value="RecF"/>
    <property type="match status" value="1"/>
</dbReference>
<dbReference type="InterPro" id="IPR001238">
    <property type="entry name" value="DNA-binding_RecF"/>
</dbReference>
<dbReference type="InterPro" id="IPR018078">
    <property type="entry name" value="DNA-binding_RecF_CS"/>
</dbReference>
<dbReference type="InterPro" id="IPR027417">
    <property type="entry name" value="P-loop_NTPase"/>
</dbReference>
<dbReference type="InterPro" id="IPR003395">
    <property type="entry name" value="RecF/RecN/SMC_N"/>
</dbReference>
<dbReference type="InterPro" id="IPR042174">
    <property type="entry name" value="RecF_2"/>
</dbReference>
<dbReference type="NCBIfam" id="TIGR00611">
    <property type="entry name" value="recf"/>
    <property type="match status" value="1"/>
</dbReference>
<dbReference type="PANTHER" id="PTHR32182">
    <property type="entry name" value="DNA REPLICATION AND REPAIR PROTEIN RECF"/>
    <property type="match status" value="1"/>
</dbReference>
<dbReference type="PANTHER" id="PTHR32182:SF0">
    <property type="entry name" value="DNA REPLICATION AND REPAIR PROTEIN RECF"/>
    <property type="match status" value="1"/>
</dbReference>
<dbReference type="Pfam" id="PF02463">
    <property type="entry name" value="SMC_N"/>
    <property type="match status" value="1"/>
</dbReference>
<dbReference type="SUPFAM" id="SSF52540">
    <property type="entry name" value="P-loop containing nucleoside triphosphate hydrolases"/>
    <property type="match status" value="1"/>
</dbReference>
<dbReference type="PROSITE" id="PS00617">
    <property type="entry name" value="RECF_1"/>
    <property type="match status" value="1"/>
</dbReference>
<dbReference type="PROSITE" id="PS00618">
    <property type="entry name" value="RECF_2"/>
    <property type="match status" value="1"/>
</dbReference>
<comment type="function">
    <text evidence="1">The RecF protein is involved in DNA metabolism; it is required for DNA replication and normal SOS inducibility. RecF binds preferentially to single-stranded, linear DNA. It also seems to bind ATP.</text>
</comment>
<comment type="subcellular location">
    <subcellularLocation>
        <location evidence="1">Cytoplasm</location>
    </subcellularLocation>
</comment>
<comment type="similarity">
    <text evidence="1">Belongs to the RecF family.</text>
</comment>
<name>RECF_CITK8</name>
<sequence length="357" mass="40510">MSLTRLLIRDFRNIENADLALSPGFNFLVGANGSGKTSVLEAIYTLGHGRAFRSLQIGRVIRHEQESFVLHGRLQGEERETAIGLTKDKLGDSKVRIDGTDGHKVAELAHLMPMQLITPEGFTLLNGGPKYRRAFLDWGCFHNEVGFFTAWSNLKRLLKQRNAALRQVSRYEQLRPWDKELIPLAEQISTWRAEYSAGIAQDMADTCQQFLPEFSLTFSFQRGWEKETDYAEVLERSFERDRMLTYTAHGPHKADFRIRADGAPVEDTLSRGQLKLLMCALRLAQGEFLTRESGRRCLYLIDDFASELDDARRGLLASRLKATQSQVFVSAISAEHVLDMSDKNSKMFTVEKGKITD</sequence>
<accession>A8ACL2</accession>
<proteinExistence type="inferred from homology"/>
<protein>
    <recommendedName>
        <fullName evidence="1">DNA replication and repair protein RecF</fullName>
    </recommendedName>
</protein>
<gene>
    <name evidence="1" type="primary">recF</name>
    <name type="ordered locus">CKO_00046</name>
</gene>
<reference key="1">
    <citation type="submission" date="2007-08" db="EMBL/GenBank/DDBJ databases">
        <authorList>
            <consortium name="The Citrobacter koseri Genome Sequencing Project"/>
            <person name="McClelland M."/>
            <person name="Sanderson E.K."/>
            <person name="Porwollik S."/>
            <person name="Spieth J."/>
            <person name="Clifton W.S."/>
            <person name="Latreille P."/>
            <person name="Courtney L."/>
            <person name="Wang C."/>
            <person name="Pepin K."/>
            <person name="Bhonagiri V."/>
            <person name="Nash W."/>
            <person name="Johnson M."/>
            <person name="Thiruvilangam P."/>
            <person name="Wilson R."/>
        </authorList>
    </citation>
    <scope>NUCLEOTIDE SEQUENCE [LARGE SCALE GENOMIC DNA]</scope>
    <source>
        <strain>ATCC BAA-895 / CDC 4225-83 / SGSC4696</strain>
    </source>
</reference>
<evidence type="ECO:0000255" key="1">
    <source>
        <dbReference type="HAMAP-Rule" id="MF_00365"/>
    </source>
</evidence>